<proteinExistence type="evidence at transcript level"/>
<comment type="function">
    <text evidence="1">Functions as an activator of NF-kappa-B through increased phosphorylation of the IKK complex. May function in neuronal cells differentiation. May play a role in vesicular transport from endoplasmic reticulum to Golgi (By similarity).</text>
</comment>
<comment type="subunit">
    <text evidence="1">Part of the multisubunit TRAPP (transport protein particle) complex.</text>
</comment>
<comment type="subcellular location">
    <subcellularLocation>
        <location evidence="1">Golgi apparatus</location>
        <location evidence="1">cis-Golgi network</location>
    </subcellularLocation>
    <subcellularLocation>
        <location evidence="1">Endoplasmic reticulum</location>
    </subcellularLocation>
    <subcellularLocation>
        <location evidence="1">Cytoplasm</location>
    </subcellularLocation>
    <text evidence="1">Processes and cell bodies of neurons.</text>
</comment>
<comment type="similarity">
    <text evidence="2">Belongs to the NIBP family.</text>
</comment>
<evidence type="ECO:0000250" key="1"/>
<evidence type="ECO:0000305" key="2"/>
<dbReference type="EMBL" id="BC060403">
    <property type="protein sequence ID" value="AAH60403.1"/>
    <property type="molecule type" value="mRNA"/>
</dbReference>
<dbReference type="RefSeq" id="NP_001083348.1">
    <property type="nucleotide sequence ID" value="NM_001089879.1"/>
</dbReference>
<dbReference type="DNASU" id="398878"/>
<dbReference type="GeneID" id="398878"/>
<dbReference type="KEGG" id="xla:398878"/>
<dbReference type="AGR" id="Xenbase:XB-GENE-5844501"/>
<dbReference type="CTD" id="398878"/>
<dbReference type="Xenbase" id="XB-GENE-5844501">
    <property type="gene designation" value="trappc9.L"/>
</dbReference>
<dbReference type="OrthoDB" id="27962at2759"/>
<dbReference type="Proteomes" id="UP000186698">
    <property type="component" value="Chromosome 6L"/>
</dbReference>
<dbReference type="Bgee" id="398878">
    <property type="expression patterns" value="Expressed in testis and 19 other cell types or tissues"/>
</dbReference>
<dbReference type="GO" id="GO:0005783">
    <property type="term" value="C:endoplasmic reticulum"/>
    <property type="evidence" value="ECO:0007669"/>
    <property type="project" value="UniProtKB-SubCell"/>
</dbReference>
<dbReference type="GO" id="GO:0005802">
    <property type="term" value="C:trans-Golgi network"/>
    <property type="evidence" value="ECO:0000318"/>
    <property type="project" value="GO_Central"/>
</dbReference>
<dbReference type="GO" id="GO:0030154">
    <property type="term" value="P:cell differentiation"/>
    <property type="evidence" value="ECO:0007669"/>
    <property type="project" value="UniProtKB-KW"/>
</dbReference>
<dbReference type="InterPro" id="IPR013935">
    <property type="entry name" value="TRAPP_II_complex_Trs120"/>
</dbReference>
<dbReference type="PANTHER" id="PTHR21512">
    <property type="entry name" value="TRAFFICKING PROTEIN PARTICLE COMPLEX SUBUNIT 9"/>
    <property type="match status" value="1"/>
</dbReference>
<dbReference type="PANTHER" id="PTHR21512:SF5">
    <property type="entry name" value="TRAFFICKING PROTEIN PARTICLE COMPLEX SUBUNIT 9"/>
    <property type="match status" value="1"/>
</dbReference>
<dbReference type="Pfam" id="PF08626">
    <property type="entry name" value="TRAPPC9-Trs120"/>
    <property type="match status" value="2"/>
</dbReference>
<name>TPPC9_XENLA</name>
<reference key="1">
    <citation type="submission" date="2003-10" db="EMBL/GenBank/DDBJ databases">
        <authorList>
            <consortium name="NIH - Xenopus Gene Collection (XGC) project"/>
        </authorList>
    </citation>
    <scope>NUCLEOTIDE SEQUENCE [LARGE SCALE MRNA]</scope>
    <source>
        <tissue>Kidney</tissue>
    </source>
</reference>
<keyword id="KW-0963">Cytoplasm</keyword>
<keyword id="KW-0221">Differentiation</keyword>
<keyword id="KW-0256">Endoplasmic reticulum</keyword>
<keyword id="KW-0333">Golgi apparatus</keyword>
<keyword id="KW-1185">Reference proteome</keyword>
<sequence>MSAPDYMQCAEDHQTLLVVVQPVGVIKNENFFKIYNRVSSVCQVNPMNTQRLLSIRYRHQYPVDNNEWGDFQTHRKVVGLICIAECTSARDLPHTILKFEQQKEAYSSTLYDSRLFLFGFQGEMADQSRIDVASYPSYDNCAAVDKRVEDFIQSLFIVLESKRLDRTSEKSGEKIPLLYVPYEKKDFVGLDPDSRHYKKRCQGRMRKHVGDLCLQAGMLQDALVHYHMAVELLRAVNDFVWLGAALEGLCSASVIHHYPGGTGGKAGTQLRQSVTMSADSFKRHRPGAQEVLIDPGALSTNGINMDASTEIGRAKNCLSPDDIIEKYKEAISYYGKSKAAGVIELEACVKAVRVLAIQKKSMDASEFLQNVVYINLRQLSEEEKIQRYSVLSELYELIGFHRKSAFFKRVAAMQCVAPSIVEPGWKACYKLLLETLPGYSLSLDPKDFSKGTHKGWAAVQMRLLHELVYASRRMGNPALAVRHLSFLLQTMLDFLSDQEKKDVAQSLESYTSKCPGTMDPITLPEGLVLPPVPFTKLPIVRSVKLLDLPVILRPQKVKNLLGQKLSTKSPFIYSPIIAHNRSEEKNKKIDFQWVQGDVCEVQLMVYNPMPFELRVETMGLLTSGVEFEYLPAALSLPAESGLYPVTLVGVPRTTGQITVNGYHTSVCGVYSDCLLDNLPGLKNNGCTVEVIPALPRLQISTSLPRSAHVLQPSSGDEVSTHVSVQLYNGETQKVIIKLENIGAEPLEKLEVTSKTVNTKEKFYGDFLSWDLEPTLSQFPLKPGNTATLTVYIKVKLDFSCQENLLQDLSDDGISVSGLQISSPFRHVSKPRVETKPVNQSDSKSSDFSHVKTLEGILNFKYSGGPGHVEGYYRNLSLGLHVDVEPSVFFTRVSTLPATSTRQCHLLFDVFNSTEHELTINAKDNQELILHAGECQRMAIQVDKFNFEGISDAPSEKQNYHNMKEIEEERQHSKGLEINSKLGIRWKIPTLKREGEASVEGVLNQLVLEHLQLAPLQWDVLVDGKPCDCDAIADCKVGDPIHLEVRLTNCSKNAVGPFALTVIPYQDYQNGVHNHELQDIVTFVGSNTFYIGAVQPMDRSVCFGALLFLYTGDFYLDIKFQDDNSNRELPLSWFCLPSVHIRAIDTLNETKF</sequence>
<protein>
    <recommendedName>
        <fullName>Trafficking protein particle complex subunit 9</fullName>
    </recommendedName>
    <alternativeName>
        <fullName>NIK- and IKBKB-binding protein homolog</fullName>
    </alternativeName>
</protein>
<gene>
    <name type="primary">trappc9</name>
    <name type="synonym">nibp</name>
</gene>
<accession>Q6PA97</accession>
<organism>
    <name type="scientific">Xenopus laevis</name>
    <name type="common">African clawed frog</name>
    <dbReference type="NCBI Taxonomy" id="8355"/>
    <lineage>
        <taxon>Eukaryota</taxon>
        <taxon>Metazoa</taxon>
        <taxon>Chordata</taxon>
        <taxon>Craniata</taxon>
        <taxon>Vertebrata</taxon>
        <taxon>Euteleostomi</taxon>
        <taxon>Amphibia</taxon>
        <taxon>Batrachia</taxon>
        <taxon>Anura</taxon>
        <taxon>Pipoidea</taxon>
        <taxon>Pipidae</taxon>
        <taxon>Xenopodinae</taxon>
        <taxon>Xenopus</taxon>
        <taxon>Xenopus</taxon>
    </lineage>
</organism>
<feature type="chain" id="PRO_0000341588" description="Trafficking protein particle complex subunit 9">
    <location>
        <begin position="1"/>
        <end position="1151"/>
    </location>
</feature>